<comment type="function">
    <text evidence="1">Catalyzes the condensation of (S)-aspartate-beta-semialdehyde [(S)-ASA] and pyruvate to 4-hydroxy-tetrahydrodipicolinate (HTPA).</text>
</comment>
<comment type="catalytic activity">
    <reaction evidence="1">
        <text>L-aspartate 4-semialdehyde + pyruvate = (2S,4S)-4-hydroxy-2,3,4,5-tetrahydrodipicolinate + H2O + H(+)</text>
        <dbReference type="Rhea" id="RHEA:34171"/>
        <dbReference type="ChEBI" id="CHEBI:15361"/>
        <dbReference type="ChEBI" id="CHEBI:15377"/>
        <dbReference type="ChEBI" id="CHEBI:15378"/>
        <dbReference type="ChEBI" id="CHEBI:67139"/>
        <dbReference type="ChEBI" id="CHEBI:537519"/>
        <dbReference type="EC" id="4.3.3.7"/>
    </reaction>
</comment>
<comment type="pathway">
    <text evidence="1">Amino-acid biosynthesis; L-lysine biosynthesis via DAP pathway; (S)-tetrahydrodipicolinate from L-aspartate: step 3/4.</text>
</comment>
<comment type="subunit">
    <text evidence="1">Homotetramer; dimer of dimers.</text>
</comment>
<comment type="subcellular location">
    <subcellularLocation>
        <location evidence="1">Cytoplasm</location>
    </subcellularLocation>
</comment>
<comment type="similarity">
    <text evidence="1">Belongs to the DapA family.</text>
</comment>
<comment type="caution">
    <text evidence="2">Was originally thought to be a dihydrodipicolinate synthase (DHDPS), catalyzing the condensation of (S)-aspartate-beta-semialdehyde [(S)-ASA] and pyruvate to dihydrodipicolinate (DHDP). However, it was shown in E.coli that the product of the enzymatic reaction is not dihydrodipicolinate but in fact (4S)-4-hydroxy-2,3,4,5-tetrahydro-(2S)-dipicolinic acid (HTPA), and that the consecutive dehydration reaction leading to DHDP is not spontaneous but catalyzed by DapB.</text>
</comment>
<evidence type="ECO:0000255" key="1">
    <source>
        <dbReference type="HAMAP-Rule" id="MF_00418"/>
    </source>
</evidence>
<evidence type="ECO:0000305" key="2"/>
<protein>
    <recommendedName>
        <fullName evidence="1">4-hydroxy-tetrahydrodipicolinate synthase</fullName>
        <shortName evidence="1">HTPA synthase</shortName>
        <ecNumber evidence="1">4.3.3.7</ecNumber>
    </recommendedName>
</protein>
<organism>
    <name type="scientific">Pasteurella multocida (strain Pm70)</name>
    <dbReference type="NCBI Taxonomy" id="272843"/>
    <lineage>
        <taxon>Bacteria</taxon>
        <taxon>Pseudomonadati</taxon>
        <taxon>Pseudomonadota</taxon>
        <taxon>Gammaproteobacteria</taxon>
        <taxon>Pasteurellales</taxon>
        <taxon>Pasteurellaceae</taxon>
        <taxon>Pasteurella</taxon>
    </lineage>
</organism>
<gene>
    <name evidence="1" type="primary">dapA</name>
    <name type="ordered locus">PM1051</name>
</gene>
<name>DAPA_PASMU</name>
<proteinExistence type="inferred from homology"/>
<dbReference type="EC" id="4.3.3.7" evidence="1"/>
<dbReference type="EMBL" id="AE004439">
    <property type="protein sequence ID" value="AAK03135.1"/>
    <property type="molecule type" value="Genomic_DNA"/>
</dbReference>
<dbReference type="RefSeq" id="WP_005751782.1">
    <property type="nucleotide sequence ID" value="NC_002663.1"/>
</dbReference>
<dbReference type="SMR" id="Q9CLZ7"/>
<dbReference type="STRING" id="272843.PM1051"/>
<dbReference type="EnsemblBacteria" id="AAK03135">
    <property type="protein sequence ID" value="AAK03135"/>
    <property type="gene ID" value="PM1051"/>
</dbReference>
<dbReference type="GeneID" id="77206367"/>
<dbReference type="KEGG" id="pmu:PM1051"/>
<dbReference type="PATRIC" id="fig|272843.6.peg.1065"/>
<dbReference type="HOGENOM" id="CLU_049343_7_1_6"/>
<dbReference type="OrthoDB" id="9782828at2"/>
<dbReference type="UniPathway" id="UPA00034">
    <property type="reaction ID" value="UER00017"/>
</dbReference>
<dbReference type="Proteomes" id="UP000000809">
    <property type="component" value="Chromosome"/>
</dbReference>
<dbReference type="GO" id="GO:0005829">
    <property type="term" value="C:cytosol"/>
    <property type="evidence" value="ECO:0007669"/>
    <property type="project" value="TreeGrafter"/>
</dbReference>
<dbReference type="GO" id="GO:0008840">
    <property type="term" value="F:4-hydroxy-tetrahydrodipicolinate synthase activity"/>
    <property type="evidence" value="ECO:0007669"/>
    <property type="project" value="UniProtKB-UniRule"/>
</dbReference>
<dbReference type="GO" id="GO:0019877">
    <property type="term" value="P:diaminopimelate biosynthetic process"/>
    <property type="evidence" value="ECO:0007669"/>
    <property type="project" value="UniProtKB-UniRule"/>
</dbReference>
<dbReference type="GO" id="GO:0009089">
    <property type="term" value="P:lysine biosynthetic process via diaminopimelate"/>
    <property type="evidence" value="ECO:0007669"/>
    <property type="project" value="UniProtKB-UniRule"/>
</dbReference>
<dbReference type="CDD" id="cd00950">
    <property type="entry name" value="DHDPS"/>
    <property type="match status" value="1"/>
</dbReference>
<dbReference type="FunFam" id="3.20.20.70:FF:000046">
    <property type="entry name" value="4-hydroxy-tetrahydrodipicolinate synthase"/>
    <property type="match status" value="1"/>
</dbReference>
<dbReference type="Gene3D" id="3.20.20.70">
    <property type="entry name" value="Aldolase class I"/>
    <property type="match status" value="1"/>
</dbReference>
<dbReference type="HAMAP" id="MF_00418">
    <property type="entry name" value="DapA"/>
    <property type="match status" value="1"/>
</dbReference>
<dbReference type="InterPro" id="IPR013785">
    <property type="entry name" value="Aldolase_TIM"/>
</dbReference>
<dbReference type="InterPro" id="IPR005263">
    <property type="entry name" value="DapA"/>
</dbReference>
<dbReference type="InterPro" id="IPR002220">
    <property type="entry name" value="DapA-like"/>
</dbReference>
<dbReference type="InterPro" id="IPR020625">
    <property type="entry name" value="Schiff_base-form_aldolases_AS"/>
</dbReference>
<dbReference type="InterPro" id="IPR020624">
    <property type="entry name" value="Schiff_base-form_aldolases_CS"/>
</dbReference>
<dbReference type="NCBIfam" id="TIGR00674">
    <property type="entry name" value="dapA"/>
    <property type="match status" value="1"/>
</dbReference>
<dbReference type="PANTHER" id="PTHR12128:SF66">
    <property type="entry name" value="4-HYDROXY-2-OXOGLUTARATE ALDOLASE, MITOCHONDRIAL"/>
    <property type="match status" value="1"/>
</dbReference>
<dbReference type="PANTHER" id="PTHR12128">
    <property type="entry name" value="DIHYDRODIPICOLINATE SYNTHASE"/>
    <property type="match status" value="1"/>
</dbReference>
<dbReference type="Pfam" id="PF00701">
    <property type="entry name" value="DHDPS"/>
    <property type="match status" value="1"/>
</dbReference>
<dbReference type="PIRSF" id="PIRSF001365">
    <property type="entry name" value="DHDPS"/>
    <property type="match status" value="1"/>
</dbReference>
<dbReference type="PRINTS" id="PR00146">
    <property type="entry name" value="DHPICSNTHASE"/>
</dbReference>
<dbReference type="SMART" id="SM01130">
    <property type="entry name" value="DHDPS"/>
    <property type="match status" value="1"/>
</dbReference>
<dbReference type="SUPFAM" id="SSF51569">
    <property type="entry name" value="Aldolase"/>
    <property type="match status" value="1"/>
</dbReference>
<dbReference type="PROSITE" id="PS00665">
    <property type="entry name" value="DHDPS_1"/>
    <property type="match status" value="1"/>
</dbReference>
<dbReference type="PROSITE" id="PS00666">
    <property type="entry name" value="DHDPS_2"/>
    <property type="match status" value="1"/>
</dbReference>
<reference key="1">
    <citation type="journal article" date="2001" name="Proc. Natl. Acad. Sci. U.S.A.">
        <title>Complete genomic sequence of Pasteurella multocida Pm70.</title>
        <authorList>
            <person name="May B.J."/>
            <person name="Zhang Q."/>
            <person name="Li L.L."/>
            <person name="Paustian M.L."/>
            <person name="Whittam T.S."/>
            <person name="Kapur V."/>
        </authorList>
    </citation>
    <scope>NUCLEOTIDE SEQUENCE [LARGE SCALE GENOMIC DNA]</scope>
    <source>
        <strain>Pm70</strain>
    </source>
</reference>
<accession>Q9CLZ7</accession>
<sequence length="298" mass="31759">MSANNYLFSGSIVAIVTPMDSSGEIDFVRLKSLVEHHIAAGTDAIVSVGTTGEAATLSIDENVKTILKTVEFADGRIPVIAGAGANATSEAIVMTKLLNDSGVAGCLSVVPYYNKPTQEGMYQHFKAIAECTDLPQILYNVPSRTGSDLLPETVARLAKINNIVAIKEATGDLSRVAKIKELAGEDFIFLSGDDATGLESIKLGGQGVISVTNNVAAADMAKMCHLALNGQFEEAEQINQRLMALHKNLFVESNPIPVKWAAYRLGLIDTPTLRLPLTTLSEHLQPKVEDALKIAGLL</sequence>
<keyword id="KW-0028">Amino-acid biosynthesis</keyword>
<keyword id="KW-0963">Cytoplasm</keyword>
<keyword id="KW-0220">Diaminopimelate biosynthesis</keyword>
<keyword id="KW-0456">Lyase</keyword>
<keyword id="KW-0457">Lysine biosynthesis</keyword>
<keyword id="KW-1185">Reference proteome</keyword>
<keyword id="KW-0704">Schiff base</keyword>
<feature type="chain" id="PRO_0000103133" description="4-hydroxy-tetrahydrodipicolinate synthase">
    <location>
        <begin position="1"/>
        <end position="298"/>
    </location>
</feature>
<feature type="active site" description="Proton donor/acceptor" evidence="1">
    <location>
        <position position="139"/>
    </location>
</feature>
<feature type="active site" description="Schiff-base intermediate with substrate" evidence="1">
    <location>
        <position position="167"/>
    </location>
</feature>
<feature type="binding site" evidence="1">
    <location>
        <position position="51"/>
    </location>
    <ligand>
        <name>pyruvate</name>
        <dbReference type="ChEBI" id="CHEBI:15361"/>
    </ligand>
</feature>
<feature type="binding site" evidence="1">
    <location>
        <position position="209"/>
    </location>
    <ligand>
        <name>pyruvate</name>
        <dbReference type="ChEBI" id="CHEBI:15361"/>
    </ligand>
</feature>
<feature type="site" description="Part of a proton relay during catalysis" evidence="1">
    <location>
        <position position="50"/>
    </location>
</feature>
<feature type="site" description="Part of a proton relay during catalysis" evidence="1">
    <location>
        <position position="113"/>
    </location>
</feature>